<gene>
    <name type="primary">bna5-1</name>
    <name type="ORF">ATEG_04474</name>
</gene>
<evidence type="ECO:0000255" key="1">
    <source>
        <dbReference type="HAMAP-Rule" id="MF_03017"/>
    </source>
</evidence>
<reference key="1">
    <citation type="submission" date="2005-09" db="EMBL/GenBank/DDBJ databases">
        <title>Annotation of the Aspergillus terreus NIH2624 genome.</title>
        <authorList>
            <person name="Birren B.W."/>
            <person name="Lander E.S."/>
            <person name="Galagan J.E."/>
            <person name="Nusbaum C."/>
            <person name="Devon K."/>
            <person name="Henn M."/>
            <person name="Ma L.-J."/>
            <person name="Jaffe D.B."/>
            <person name="Butler J."/>
            <person name="Alvarez P."/>
            <person name="Gnerre S."/>
            <person name="Grabherr M."/>
            <person name="Kleber M."/>
            <person name="Mauceli E.W."/>
            <person name="Brockman W."/>
            <person name="Rounsley S."/>
            <person name="Young S.K."/>
            <person name="LaButti K."/>
            <person name="Pushparaj V."/>
            <person name="DeCaprio D."/>
            <person name="Crawford M."/>
            <person name="Koehrsen M."/>
            <person name="Engels R."/>
            <person name="Montgomery P."/>
            <person name="Pearson M."/>
            <person name="Howarth C."/>
            <person name="Larson L."/>
            <person name="Luoma S."/>
            <person name="White J."/>
            <person name="Alvarado L."/>
            <person name="Kodira C.D."/>
            <person name="Zeng Q."/>
            <person name="Oleary S."/>
            <person name="Yandava C."/>
            <person name="Denning D.W."/>
            <person name="Nierman W.C."/>
            <person name="Milne T."/>
            <person name="Madden K."/>
        </authorList>
    </citation>
    <scope>NUCLEOTIDE SEQUENCE [LARGE SCALE GENOMIC DNA]</scope>
    <source>
        <strain>NIH 2624 / FGSC A1156</strain>
    </source>
</reference>
<proteinExistence type="inferred from homology"/>
<dbReference type="EC" id="3.7.1.3" evidence="1"/>
<dbReference type="EMBL" id="CH476599">
    <property type="protein sequence ID" value="EAU34921.1"/>
    <property type="molecule type" value="Genomic_DNA"/>
</dbReference>
<dbReference type="RefSeq" id="XP_001213652.1">
    <property type="nucleotide sequence ID" value="XM_001213652.1"/>
</dbReference>
<dbReference type="SMR" id="Q0CPB0"/>
<dbReference type="STRING" id="341663.Q0CPB0"/>
<dbReference type="EnsemblFungi" id="EAU34921">
    <property type="protein sequence ID" value="EAU34921"/>
    <property type="gene ID" value="ATEG_04474"/>
</dbReference>
<dbReference type="GeneID" id="4320432"/>
<dbReference type="VEuPathDB" id="FungiDB:ATEG_04474"/>
<dbReference type="eggNOG" id="KOG3846">
    <property type="taxonomic scope" value="Eukaryota"/>
</dbReference>
<dbReference type="HOGENOM" id="CLU_003433_4_0_1"/>
<dbReference type="OMA" id="LPGWNSH"/>
<dbReference type="OrthoDB" id="5978656at2759"/>
<dbReference type="UniPathway" id="UPA00253">
    <property type="reaction ID" value="UER00329"/>
</dbReference>
<dbReference type="UniPathway" id="UPA00334">
    <property type="reaction ID" value="UER00455"/>
</dbReference>
<dbReference type="Proteomes" id="UP000007963">
    <property type="component" value="Unassembled WGS sequence"/>
</dbReference>
<dbReference type="GO" id="GO:0005737">
    <property type="term" value="C:cytoplasm"/>
    <property type="evidence" value="ECO:0007669"/>
    <property type="project" value="UniProtKB-SubCell"/>
</dbReference>
<dbReference type="GO" id="GO:0030429">
    <property type="term" value="F:kynureninase activity"/>
    <property type="evidence" value="ECO:0007669"/>
    <property type="project" value="UniProtKB-UniRule"/>
</dbReference>
<dbReference type="GO" id="GO:0030170">
    <property type="term" value="F:pyridoxal phosphate binding"/>
    <property type="evidence" value="ECO:0007669"/>
    <property type="project" value="UniProtKB-UniRule"/>
</dbReference>
<dbReference type="GO" id="GO:0034354">
    <property type="term" value="P:'de novo' NAD biosynthetic process from L-tryptophan"/>
    <property type="evidence" value="ECO:0007669"/>
    <property type="project" value="UniProtKB-UniRule"/>
</dbReference>
<dbReference type="GO" id="GO:0043420">
    <property type="term" value="P:anthranilate metabolic process"/>
    <property type="evidence" value="ECO:0007669"/>
    <property type="project" value="UniProtKB-UniRule"/>
</dbReference>
<dbReference type="GO" id="GO:0097053">
    <property type="term" value="P:L-kynurenine catabolic process"/>
    <property type="evidence" value="ECO:0007669"/>
    <property type="project" value="UniProtKB-UniRule"/>
</dbReference>
<dbReference type="GO" id="GO:0019441">
    <property type="term" value="P:L-tryptophan catabolic process to kynurenine"/>
    <property type="evidence" value="ECO:0007669"/>
    <property type="project" value="TreeGrafter"/>
</dbReference>
<dbReference type="GO" id="GO:0019805">
    <property type="term" value="P:quinolinate biosynthetic process"/>
    <property type="evidence" value="ECO:0007669"/>
    <property type="project" value="UniProtKB-UniRule"/>
</dbReference>
<dbReference type="FunFam" id="3.40.640.10:FF:000031">
    <property type="entry name" value="Kynureninase"/>
    <property type="match status" value="1"/>
</dbReference>
<dbReference type="Gene3D" id="3.90.1150.10">
    <property type="entry name" value="Aspartate Aminotransferase, domain 1"/>
    <property type="match status" value="1"/>
</dbReference>
<dbReference type="Gene3D" id="3.40.640.10">
    <property type="entry name" value="Type I PLP-dependent aspartate aminotransferase-like (Major domain)"/>
    <property type="match status" value="1"/>
</dbReference>
<dbReference type="HAMAP" id="MF_01970">
    <property type="entry name" value="Kynureninase"/>
    <property type="match status" value="1"/>
</dbReference>
<dbReference type="InterPro" id="IPR000192">
    <property type="entry name" value="Aminotrans_V_dom"/>
</dbReference>
<dbReference type="InterPro" id="IPR010111">
    <property type="entry name" value="Kynureninase"/>
</dbReference>
<dbReference type="InterPro" id="IPR015424">
    <property type="entry name" value="PyrdxlP-dep_Trfase"/>
</dbReference>
<dbReference type="InterPro" id="IPR015421">
    <property type="entry name" value="PyrdxlP-dep_Trfase_major"/>
</dbReference>
<dbReference type="InterPro" id="IPR015422">
    <property type="entry name" value="PyrdxlP-dep_Trfase_small"/>
</dbReference>
<dbReference type="NCBIfam" id="TIGR01814">
    <property type="entry name" value="kynureninase"/>
    <property type="match status" value="1"/>
</dbReference>
<dbReference type="PANTHER" id="PTHR14084">
    <property type="entry name" value="KYNURENINASE"/>
    <property type="match status" value="1"/>
</dbReference>
<dbReference type="PANTHER" id="PTHR14084:SF0">
    <property type="entry name" value="KYNURENINASE"/>
    <property type="match status" value="1"/>
</dbReference>
<dbReference type="Pfam" id="PF00266">
    <property type="entry name" value="Aminotran_5"/>
    <property type="match status" value="1"/>
</dbReference>
<dbReference type="Pfam" id="PF22580">
    <property type="entry name" value="KYNU_C"/>
    <property type="match status" value="1"/>
</dbReference>
<dbReference type="PIRSF" id="PIRSF038800">
    <property type="entry name" value="KYNU"/>
    <property type="match status" value="1"/>
</dbReference>
<dbReference type="SUPFAM" id="SSF53383">
    <property type="entry name" value="PLP-dependent transferases"/>
    <property type="match status" value="1"/>
</dbReference>
<organism>
    <name type="scientific">Aspergillus terreus (strain NIH 2624 / FGSC A1156)</name>
    <dbReference type="NCBI Taxonomy" id="341663"/>
    <lineage>
        <taxon>Eukaryota</taxon>
        <taxon>Fungi</taxon>
        <taxon>Dikarya</taxon>
        <taxon>Ascomycota</taxon>
        <taxon>Pezizomycotina</taxon>
        <taxon>Eurotiomycetes</taxon>
        <taxon>Eurotiomycetidae</taxon>
        <taxon>Eurotiales</taxon>
        <taxon>Aspergillaceae</taxon>
        <taxon>Aspergillus</taxon>
        <taxon>Aspergillus subgen. Circumdati</taxon>
    </lineage>
</organism>
<name>KYNU1_ASPTN</name>
<accession>Q0CPB0</accession>
<keyword id="KW-0963">Cytoplasm</keyword>
<keyword id="KW-0378">Hydrolase</keyword>
<keyword id="KW-0662">Pyridine nucleotide biosynthesis</keyword>
<keyword id="KW-0663">Pyridoxal phosphate</keyword>
<keyword id="KW-1185">Reference proteome</keyword>
<sequence>MGSRLHLRDIKHGPPLPYHDDIRAFTKEYAESLDAQDPLRKFRDEFIIPSKKDLKRTVLAADENTDDSTDPRCIYLCGNSLGLQPRSTRKYIDRYLRTWAIKGVTGHFTPHDDQLLPPFVDVDVAGAKLMAPVVGALESEVAVMDTLTTNLHLLMASFYRPTQERYKIIIEGKAFPSDHYAVESQIRHHNREPSEAMVLIEPEDPKHPILTTDQILRVIDENASSAALILLSAIQFYTGQYFDIKTITAHAQSKGIIVGWDCAHAAGNVDLQLHDWNVDFAAWCNYKYLNSGPGGMAGLFVHERHGHVESKNGAQNEGFRPRLSGWWGGDKETRFLMDNNFRPQVGAAGFQLSNPSVLDMNAVVASLEIFSRASMEKIRQKSLHLTGYLEHLLVTYPLDAPPEEKPFTIITPSNPAERGAQLSLRLGPGLLEKVLEVLEEQGVIIDERKPDVIRVAPAPLYNTYAELSSSGIHIAYSSYNQYS</sequence>
<protein>
    <recommendedName>
        <fullName evidence="1">Kynureninase 1</fullName>
        <ecNumber evidence="1">3.7.1.3</ecNumber>
    </recommendedName>
    <alternativeName>
        <fullName evidence="1">Biosynthesis of nicotinic acid protein 5-1</fullName>
    </alternativeName>
    <alternativeName>
        <fullName evidence="1">L-kynurenine hydrolase 1</fullName>
    </alternativeName>
</protein>
<feature type="chain" id="PRO_0000356971" description="Kynureninase 1">
    <location>
        <begin position="1"/>
        <end position="483"/>
    </location>
</feature>
<feature type="binding site" evidence="1">
    <location>
        <position position="147"/>
    </location>
    <ligand>
        <name>pyridoxal 5'-phosphate</name>
        <dbReference type="ChEBI" id="CHEBI:597326"/>
    </ligand>
</feature>
<feature type="binding site" evidence="1">
    <location>
        <position position="148"/>
    </location>
    <ligand>
        <name>pyridoxal 5'-phosphate</name>
        <dbReference type="ChEBI" id="CHEBI:597326"/>
    </ligand>
</feature>
<feature type="binding site" evidence="1">
    <location>
        <begin position="175"/>
        <end position="178"/>
    </location>
    <ligand>
        <name>pyridoxal 5'-phosphate</name>
        <dbReference type="ChEBI" id="CHEBI:597326"/>
    </ligand>
</feature>
<feature type="binding site" evidence="1">
    <location>
        <position position="232"/>
    </location>
    <ligand>
        <name>pyridoxal 5'-phosphate</name>
        <dbReference type="ChEBI" id="CHEBI:597326"/>
    </ligand>
</feature>
<feature type="binding site" evidence="1">
    <location>
        <position position="261"/>
    </location>
    <ligand>
        <name>pyridoxal 5'-phosphate</name>
        <dbReference type="ChEBI" id="CHEBI:597326"/>
    </ligand>
</feature>
<feature type="binding site" evidence="1">
    <location>
        <position position="264"/>
    </location>
    <ligand>
        <name>pyridoxal 5'-phosphate</name>
        <dbReference type="ChEBI" id="CHEBI:597326"/>
    </ligand>
</feature>
<feature type="binding site" evidence="1">
    <location>
        <position position="286"/>
    </location>
    <ligand>
        <name>pyridoxal 5'-phosphate</name>
        <dbReference type="ChEBI" id="CHEBI:597326"/>
    </ligand>
</feature>
<feature type="binding site" evidence="1">
    <location>
        <position position="326"/>
    </location>
    <ligand>
        <name>pyridoxal 5'-phosphate</name>
        <dbReference type="ChEBI" id="CHEBI:597326"/>
    </ligand>
</feature>
<feature type="binding site" evidence="1">
    <location>
        <position position="354"/>
    </location>
    <ligand>
        <name>pyridoxal 5'-phosphate</name>
        <dbReference type="ChEBI" id="CHEBI:597326"/>
    </ligand>
</feature>
<feature type="modified residue" description="N6-(pyridoxal phosphate)lysine" evidence="1">
    <location>
        <position position="287"/>
    </location>
</feature>
<comment type="function">
    <text evidence="1">Catalyzes the cleavage of L-kynurenine (L-Kyn) and L-3-hydroxykynurenine (L-3OHKyn) into anthranilic acid (AA) and 3-hydroxyanthranilic acid (3-OHAA), respectively.</text>
</comment>
<comment type="catalytic activity">
    <reaction evidence="1">
        <text>L-kynurenine + H2O = anthranilate + L-alanine + H(+)</text>
        <dbReference type="Rhea" id="RHEA:16813"/>
        <dbReference type="ChEBI" id="CHEBI:15377"/>
        <dbReference type="ChEBI" id="CHEBI:15378"/>
        <dbReference type="ChEBI" id="CHEBI:16567"/>
        <dbReference type="ChEBI" id="CHEBI:57959"/>
        <dbReference type="ChEBI" id="CHEBI:57972"/>
        <dbReference type="EC" id="3.7.1.3"/>
    </reaction>
</comment>
<comment type="catalytic activity">
    <reaction evidence="1">
        <text>3-hydroxy-L-kynurenine + H2O = 3-hydroxyanthranilate + L-alanine + H(+)</text>
        <dbReference type="Rhea" id="RHEA:25143"/>
        <dbReference type="ChEBI" id="CHEBI:15377"/>
        <dbReference type="ChEBI" id="CHEBI:15378"/>
        <dbReference type="ChEBI" id="CHEBI:36559"/>
        <dbReference type="ChEBI" id="CHEBI:57972"/>
        <dbReference type="ChEBI" id="CHEBI:58125"/>
        <dbReference type="EC" id="3.7.1.3"/>
    </reaction>
</comment>
<comment type="cofactor">
    <cofactor evidence="1">
        <name>pyridoxal 5'-phosphate</name>
        <dbReference type="ChEBI" id="CHEBI:597326"/>
    </cofactor>
</comment>
<comment type="pathway">
    <text evidence="1">Amino-acid degradation; L-kynurenine degradation; L-alanine and anthranilate from L-kynurenine: step 1/1.</text>
</comment>
<comment type="pathway">
    <text evidence="1">Cofactor biosynthesis; NAD(+) biosynthesis; quinolinate from L-kynurenine: step 2/3.</text>
</comment>
<comment type="subunit">
    <text evidence="1">Homodimer.</text>
</comment>
<comment type="subcellular location">
    <subcellularLocation>
        <location evidence="1">Cytoplasm</location>
    </subcellularLocation>
</comment>
<comment type="similarity">
    <text evidence="1">Belongs to the kynureninase family.</text>
</comment>